<evidence type="ECO:0000269" key="1">
    <source>
    </source>
</evidence>
<evidence type="ECO:0000305" key="2"/>
<comment type="function">
    <text evidence="1">Mediates visceral muscle contractile activity (myotropic activity).</text>
</comment>
<comment type="subcellular location">
    <subcellularLocation>
        <location>Secreted</location>
    </subcellularLocation>
</comment>
<comment type="mass spectrometry" mass="1146.6" method="MALDI" evidence="1"/>
<comment type="similarity">
    <text evidence="2">Belongs to the periviscerokinin family.</text>
</comment>
<accession>P83932</accession>
<accession>P82700</accession>
<name>PVK3_NAUCI</name>
<proteinExistence type="evidence at protein level"/>
<dbReference type="GO" id="GO:0005576">
    <property type="term" value="C:extracellular region"/>
    <property type="evidence" value="ECO:0007669"/>
    <property type="project" value="UniProtKB-SubCell"/>
</dbReference>
<dbReference type="GO" id="GO:0005763">
    <property type="term" value="C:mitochondrial small ribosomal subunit"/>
    <property type="evidence" value="ECO:0000314"/>
    <property type="project" value="UniProtKB"/>
</dbReference>
<dbReference type="GO" id="GO:0003735">
    <property type="term" value="F:structural constituent of ribosome"/>
    <property type="evidence" value="ECO:0000314"/>
    <property type="project" value="UniProtKB"/>
</dbReference>
<dbReference type="GO" id="GO:0007218">
    <property type="term" value="P:neuropeptide signaling pathway"/>
    <property type="evidence" value="ECO:0007669"/>
    <property type="project" value="UniProtKB-KW"/>
</dbReference>
<dbReference type="GO" id="GO:0006412">
    <property type="term" value="P:translation"/>
    <property type="evidence" value="ECO:0000303"/>
    <property type="project" value="UniProtKB"/>
</dbReference>
<dbReference type="InterPro" id="IPR013231">
    <property type="entry name" value="Periviscerokinin"/>
</dbReference>
<dbReference type="Pfam" id="PF08259">
    <property type="entry name" value="Periviscerokin"/>
    <property type="match status" value="1"/>
</dbReference>
<sequence length="11" mass="1147">GSSGMIPFPRV</sequence>
<organism>
    <name type="scientific">Nauphoeta cinerea</name>
    <name type="common">Cinereous cockroach</name>
    <name type="synonym">Gray cockroach</name>
    <dbReference type="NCBI Taxonomy" id="6990"/>
    <lineage>
        <taxon>Eukaryota</taxon>
        <taxon>Metazoa</taxon>
        <taxon>Ecdysozoa</taxon>
        <taxon>Arthropoda</taxon>
        <taxon>Hexapoda</taxon>
        <taxon>Insecta</taxon>
        <taxon>Pterygota</taxon>
        <taxon>Neoptera</taxon>
        <taxon>Polyneoptera</taxon>
        <taxon>Dictyoptera</taxon>
        <taxon>Blattodea</taxon>
        <taxon>Blaberoidea</taxon>
        <taxon>Blaberidae</taxon>
        <taxon>Oxyhaloinae</taxon>
        <taxon>Nauphoeta</taxon>
    </lineage>
</organism>
<feature type="peptide" id="PRO_0000044288" description="Periviscerokinin-3">
    <location>
        <begin position="1"/>
        <end position="11"/>
    </location>
</feature>
<feature type="modified residue" description="Valine amide" evidence="1">
    <location>
        <position position="11"/>
    </location>
</feature>
<keyword id="KW-0027">Amidation</keyword>
<keyword id="KW-0903">Direct protein sequencing</keyword>
<keyword id="KW-0527">Neuropeptide</keyword>
<keyword id="KW-0964">Secreted</keyword>
<reference key="1">
    <citation type="journal article" date="2000" name="Eur. J. Biochem.">
        <title>Identification of novel periviscerokinins from single neurohaemal release sites in insects. MS/MS fragmentation complemented by Edman degradation.</title>
        <authorList>
            <person name="Predel R."/>
            <person name="Kellner R."/>
            <person name="Baggerman G."/>
            <person name="Steinmetzer T."/>
            <person name="Schoofs L."/>
        </authorList>
    </citation>
    <scope>PROTEIN SEQUENCE</scope>
    <scope>FUNCTION</scope>
    <scope>MASS SPECTROMETRY</scope>
    <scope>AMIDATION AT VAL-11</scope>
    <source>
        <tissue>Abdominal perisympathetic organs</tissue>
    </source>
</reference>
<protein>
    <recommendedName>
        <fullName>Periviscerokinin-3</fullName>
        <shortName>PVK-3</shortName>
    </recommendedName>
</protein>